<name>PURL_NOSP7</name>
<dbReference type="EC" id="6.3.5.3" evidence="1"/>
<dbReference type="EMBL" id="CP001037">
    <property type="protein sequence ID" value="ACC79617.1"/>
    <property type="molecule type" value="Genomic_DNA"/>
</dbReference>
<dbReference type="RefSeq" id="WP_012407639.1">
    <property type="nucleotide sequence ID" value="NC_010628.1"/>
</dbReference>
<dbReference type="SMR" id="B2IU46"/>
<dbReference type="STRING" id="63737.Npun_F0880"/>
<dbReference type="EnsemblBacteria" id="ACC79617">
    <property type="protein sequence ID" value="ACC79617"/>
    <property type="gene ID" value="Npun_F0880"/>
</dbReference>
<dbReference type="KEGG" id="npu:Npun_F0880"/>
<dbReference type="eggNOG" id="COG0046">
    <property type="taxonomic scope" value="Bacteria"/>
</dbReference>
<dbReference type="HOGENOM" id="CLU_003100_0_1_3"/>
<dbReference type="OrthoDB" id="9804441at2"/>
<dbReference type="PhylomeDB" id="B2IU46"/>
<dbReference type="UniPathway" id="UPA00074">
    <property type="reaction ID" value="UER00128"/>
</dbReference>
<dbReference type="Proteomes" id="UP000001191">
    <property type="component" value="Chromosome"/>
</dbReference>
<dbReference type="GO" id="GO:0005737">
    <property type="term" value="C:cytoplasm"/>
    <property type="evidence" value="ECO:0007669"/>
    <property type="project" value="UniProtKB-SubCell"/>
</dbReference>
<dbReference type="GO" id="GO:0005524">
    <property type="term" value="F:ATP binding"/>
    <property type="evidence" value="ECO:0007669"/>
    <property type="project" value="UniProtKB-UniRule"/>
</dbReference>
<dbReference type="GO" id="GO:0000287">
    <property type="term" value="F:magnesium ion binding"/>
    <property type="evidence" value="ECO:0007669"/>
    <property type="project" value="UniProtKB-UniRule"/>
</dbReference>
<dbReference type="GO" id="GO:0004642">
    <property type="term" value="F:phosphoribosylformylglycinamidine synthase activity"/>
    <property type="evidence" value="ECO:0007669"/>
    <property type="project" value="UniProtKB-UniRule"/>
</dbReference>
<dbReference type="GO" id="GO:0006189">
    <property type="term" value="P:'de novo' IMP biosynthetic process"/>
    <property type="evidence" value="ECO:0007669"/>
    <property type="project" value="UniProtKB-UniRule"/>
</dbReference>
<dbReference type="CDD" id="cd02203">
    <property type="entry name" value="PurL_repeat1"/>
    <property type="match status" value="1"/>
</dbReference>
<dbReference type="CDD" id="cd02204">
    <property type="entry name" value="PurL_repeat2"/>
    <property type="match status" value="1"/>
</dbReference>
<dbReference type="FunFam" id="3.30.1330.10:FF:000004">
    <property type="entry name" value="Phosphoribosylformylglycinamidine synthase subunit PurL"/>
    <property type="match status" value="1"/>
</dbReference>
<dbReference type="Gene3D" id="3.90.650.10">
    <property type="entry name" value="PurM-like C-terminal domain"/>
    <property type="match status" value="2"/>
</dbReference>
<dbReference type="Gene3D" id="3.30.1330.10">
    <property type="entry name" value="PurM-like, N-terminal domain"/>
    <property type="match status" value="2"/>
</dbReference>
<dbReference type="HAMAP" id="MF_00420">
    <property type="entry name" value="PurL_2"/>
    <property type="match status" value="1"/>
</dbReference>
<dbReference type="InterPro" id="IPR010074">
    <property type="entry name" value="PRibForGlyAmidine_synth_PurL"/>
</dbReference>
<dbReference type="InterPro" id="IPR041609">
    <property type="entry name" value="PurL_linker"/>
</dbReference>
<dbReference type="InterPro" id="IPR010918">
    <property type="entry name" value="PurM-like_C_dom"/>
</dbReference>
<dbReference type="InterPro" id="IPR036676">
    <property type="entry name" value="PurM-like_C_sf"/>
</dbReference>
<dbReference type="InterPro" id="IPR016188">
    <property type="entry name" value="PurM-like_N"/>
</dbReference>
<dbReference type="InterPro" id="IPR036921">
    <property type="entry name" value="PurM-like_N_sf"/>
</dbReference>
<dbReference type="NCBIfam" id="TIGR01736">
    <property type="entry name" value="FGAM_synth_II"/>
    <property type="match status" value="1"/>
</dbReference>
<dbReference type="NCBIfam" id="NF002290">
    <property type="entry name" value="PRK01213.1"/>
    <property type="match status" value="1"/>
</dbReference>
<dbReference type="PANTHER" id="PTHR43555">
    <property type="entry name" value="PHOSPHORIBOSYLFORMYLGLYCINAMIDINE SYNTHASE SUBUNIT PURL"/>
    <property type="match status" value="1"/>
</dbReference>
<dbReference type="PANTHER" id="PTHR43555:SF1">
    <property type="entry name" value="PHOSPHORIBOSYLFORMYLGLYCINAMIDINE SYNTHASE SUBUNIT PURL"/>
    <property type="match status" value="1"/>
</dbReference>
<dbReference type="Pfam" id="PF00586">
    <property type="entry name" value="AIRS"/>
    <property type="match status" value="2"/>
</dbReference>
<dbReference type="Pfam" id="PF02769">
    <property type="entry name" value="AIRS_C"/>
    <property type="match status" value="2"/>
</dbReference>
<dbReference type="Pfam" id="PF18072">
    <property type="entry name" value="FGAR-AT_linker"/>
    <property type="match status" value="1"/>
</dbReference>
<dbReference type="PIRSF" id="PIRSF001587">
    <property type="entry name" value="FGAM_synthase_II"/>
    <property type="match status" value="1"/>
</dbReference>
<dbReference type="SUPFAM" id="SSF56042">
    <property type="entry name" value="PurM C-terminal domain-like"/>
    <property type="match status" value="2"/>
</dbReference>
<dbReference type="SUPFAM" id="SSF55326">
    <property type="entry name" value="PurM N-terminal domain-like"/>
    <property type="match status" value="2"/>
</dbReference>
<sequence length="788" mass="84417">MTATSPAFFSPQEIAAEGLKPEEYAEIVRRLGRHPNKAELGMFGVMWSEHCCYKNSRPLLKQFPTEGPRILVGPGENAGVVDLGDGLQLAFKIESHNHPSAVEPFQGAATGVGGILRDIFTMGARPIALLNSLRFGSLEDAKTQRLFQGVVAGISHYGNCVGVPTVGGEVYFDPAYSGNPLVNVMALGLMETQEIVKSGASGLGNPVLYVGSTTGRDGMGGASFASAELSDQSIDDRPAVQVGDPFLEKSLIEACLEAFKTGAVVAAQDMGAAGITCSTSEMAAKGGVGIELDLDKIPARETGMVPYEYLLSESQERMLFVAHKGREQELIDIFHRWGLQAVVAGTVIAEPIVRILFQGGVAAEIPAEALAENTPLYNRELLAEPPEYARQAWEWTPDSLPACTTAGIEIQGGQQSWNDILLTLLDTPTIASKNWVYRQYDHQVQNNTVILPGGADAAVIRLRPLEEIPNLKSKIPNLKLGVAATVDCNPRYVYLHPYEGAKAVVAEAARNLSCVGAEPLAVTDNLNFGSPEKPIGYWQLAEACRGLAEGCRELATPVTGGNVSLYNETLDSQGIPQPIYPTPVVGMVGLIPDITKICGQGWQASGDVIYLLGLPLASKISLGASEYLATIHNTVAGKPPLVDFDLERRVQKVCREGIRNGWIRSAHDSAEGGVAIALAECCIAGNLGAEINLEIAPMQNRVDEMLFAEGGARILVSVTSAQQAIWESYLQEHLGQQWQILGTVGNFETGLGVFTTDNQILIKVSIEDMSDRYSHAIARRIATNTAVS</sequence>
<organism>
    <name type="scientific">Nostoc punctiforme (strain ATCC 29133 / PCC 73102)</name>
    <dbReference type="NCBI Taxonomy" id="63737"/>
    <lineage>
        <taxon>Bacteria</taxon>
        <taxon>Bacillati</taxon>
        <taxon>Cyanobacteriota</taxon>
        <taxon>Cyanophyceae</taxon>
        <taxon>Nostocales</taxon>
        <taxon>Nostocaceae</taxon>
        <taxon>Nostoc</taxon>
    </lineage>
</organism>
<evidence type="ECO:0000255" key="1">
    <source>
        <dbReference type="HAMAP-Rule" id="MF_00420"/>
    </source>
</evidence>
<comment type="function">
    <text evidence="1">Part of the phosphoribosylformylglycinamidine synthase complex involved in the purines biosynthetic pathway. Catalyzes the ATP-dependent conversion of formylglycinamide ribonucleotide (FGAR) and glutamine to yield formylglycinamidine ribonucleotide (FGAM) and glutamate. The FGAM synthase complex is composed of three subunits. PurQ produces an ammonia molecule by converting glutamine to glutamate. PurL transfers the ammonia molecule to FGAR to form FGAM in an ATP-dependent manner. PurS interacts with PurQ and PurL and is thought to assist in the transfer of the ammonia molecule from PurQ to PurL.</text>
</comment>
<comment type="catalytic activity">
    <reaction evidence="1">
        <text>N(2)-formyl-N(1)-(5-phospho-beta-D-ribosyl)glycinamide + L-glutamine + ATP + H2O = 2-formamido-N(1)-(5-O-phospho-beta-D-ribosyl)acetamidine + L-glutamate + ADP + phosphate + H(+)</text>
        <dbReference type="Rhea" id="RHEA:17129"/>
        <dbReference type="ChEBI" id="CHEBI:15377"/>
        <dbReference type="ChEBI" id="CHEBI:15378"/>
        <dbReference type="ChEBI" id="CHEBI:29985"/>
        <dbReference type="ChEBI" id="CHEBI:30616"/>
        <dbReference type="ChEBI" id="CHEBI:43474"/>
        <dbReference type="ChEBI" id="CHEBI:58359"/>
        <dbReference type="ChEBI" id="CHEBI:147286"/>
        <dbReference type="ChEBI" id="CHEBI:147287"/>
        <dbReference type="ChEBI" id="CHEBI:456216"/>
        <dbReference type="EC" id="6.3.5.3"/>
    </reaction>
</comment>
<comment type="pathway">
    <text evidence="1">Purine metabolism; IMP biosynthesis via de novo pathway; 5-amino-1-(5-phospho-D-ribosyl)imidazole from N(2)-formyl-N(1)-(5-phospho-D-ribosyl)glycinamide: step 1/2.</text>
</comment>
<comment type="subunit">
    <text evidence="1">Monomer. Part of the FGAM synthase complex composed of 1 PurL, 1 PurQ and 2 PurS subunits.</text>
</comment>
<comment type="subcellular location">
    <subcellularLocation>
        <location evidence="1">Cytoplasm</location>
    </subcellularLocation>
</comment>
<comment type="similarity">
    <text evidence="1">Belongs to the FGAMS family.</text>
</comment>
<protein>
    <recommendedName>
        <fullName evidence="1">Phosphoribosylformylglycinamidine synthase subunit PurL</fullName>
        <shortName evidence="1">FGAM synthase</shortName>
        <ecNumber evidence="1">6.3.5.3</ecNumber>
    </recommendedName>
    <alternativeName>
        <fullName evidence="1">Formylglycinamide ribonucleotide amidotransferase subunit II</fullName>
        <shortName evidence="1">FGAR amidotransferase II</shortName>
        <shortName evidence="1">FGAR-AT II</shortName>
    </alternativeName>
    <alternativeName>
        <fullName evidence="1">Glutamine amidotransferase PurL</fullName>
    </alternativeName>
    <alternativeName>
        <fullName evidence="1">Phosphoribosylformylglycinamidine synthase subunit II</fullName>
    </alternativeName>
</protein>
<feature type="chain" id="PRO_1000194831" description="Phosphoribosylformylglycinamidine synthase subunit PurL">
    <location>
        <begin position="1"/>
        <end position="788"/>
    </location>
</feature>
<feature type="active site" evidence="1">
    <location>
        <position position="50"/>
    </location>
</feature>
<feature type="active site" description="Proton acceptor" evidence="1">
    <location>
        <position position="96"/>
    </location>
</feature>
<feature type="binding site" evidence="1">
    <location>
        <position position="53"/>
    </location>
    <ligand>
        <name>ATP</name>
        <dbReference type="ChEBI" id="CHEBI:30616"/>
    </ligand>
</feature>
<feature type="binding site" evidence="1">
    <location>
        <position position="92"/>
    </location>
    <ligand>
        <name>ATP</name>
        <dbReference type="ChEBI" id="CHEBI:30616"/>
    </ligand>
</feature>
<feature type="binding site" evidence="1">
    <location>
        <position position="94"/>
    </location>
    <ligand>
        <name>Mg(2+)</name>
        <dbReference type="ChEBI" id="CHEBI:18420"/>
        <label>1</label>
    </ligand>
</feature>
<feature type="binding site" evidence="1">
    <location>
        <begin position="95"/>
        <end position="98"/>
    </location>
    <ligand>
        <name>substrate</name>
    </ligand>
</feature>
<feature type="binding site" evidence="1">
    <location>
        <position position="117"/>
    </location>
    <ligand>
        <name>substrate</name>
    </ligand>
</feature>
<feature type="binding site" evidence="1">
    <location>
        <position position="118"/>
    </location>
    <ligand>
        <name>Mg(2+)</name>
        <dbReference type="ChEBI" id="CHEBI:18420"/>
        <label>2</label>
    </ligand>
</feature>
<feature type="binding site" evidence="1">
    <location>
        <position position="241"/>
    </location>
    <ligand>
        <name>substrate</name>
    </ligand>
</feature>
<feature type="binding site" evidence="1">
    <location>
        <position position="269"/>
    </location>
    <ligand>
        <name>Mg(2+)</name>
        <dbReference type="ChEBI" id="CHEBI:18420"/>
        <label>2</label>
    </ligand>
</feature>
<feature type="binding site" evidence="1">
    <location>
        <begin position="313"/>
        <end position="315"/>
    </location>
    <ligand>
        <name>substrate</name>
    </ligand>
</feature>
<feature type="binding site" evidence="1">
    <location>
        <position position="524"/>
    </location>
    <ligand>
        <name>ATP</name>
        <dbReference type="ChEBI" id="CHEBI:30616"/>
    </ligand>
</feature>
<feature type="binding site" evidence="1">
    <location>
        <position position="561"/>
    </location>
    <ligand>
        <name>ATP</name>
        <dbReference type="ChEBI" id="CHEBI:30616"/>
    </ligand>
</feature>
<feature type="binding site" evidence="1">
    <location>
        <position position="562"/>
    </location>
    <ligand>
        <name>Mg(2+)</name>
        <dbReference type="ChEBI" id="CHEBI:18420"/>
        <label>1</label>
    </ligand>
</feature>
<feature type="binding site" evidence="1">
    <location>
        <position position="564"/>
    </location>
    <ligand>
        <name>substrate</name>
    </ligand>
</feature>
<keyword id="KW-0067">ATP-binding</keyword>
<keyword id="KW-0963">Cytoplasm</keyword>
<keyword id="KW-0436">Ligase</keyword>
<keyword id="KW-0460">Magnesium</keyword>
<keyword id="KW-0479">Metal-binding</keyword>
<keyword id="KW-0547">Nucleotide-binding</keyword>
<keyword id="KW-0658">Purine biosynthesis</keyword>
<keyword id="KW-1185">Reference proteome</keyword>
<proteinExistence type="inferred from homology"/>
<reference key="1">
    <citation type="journal article" date="2013" name="Plant Physiol.">
        <title>A Nostoc punctiforme Sugar Transporter Necessary to Establish a Cyanobacterium-Plant Symbiosis.</title>
        <authorList>
            <person name="Ekman M."/>
            <person name="Picossi S."/>
            <person name="Campbell E.L."/>
            <person name="Meeks J.C."/>
            <person name="Flores E."/>
        </authorList>
    </citation>
    <scope>NUCLEOTIDE SEQUENCE [LARGE SCALE GENOMIC DNA]</scope>
    <source>
        <strain>ATCC 29133 / PCC 73102</strain>
    </source>
</reference>
<gene>
    <name evidence="1" type="primary">purL</name>
    <name type="ordered locus">Npun_F0880</name>
</gene>
<accession>B2IU46</accession>